<comment type="function">
    <text evidence="1">Essential cell division protein that coordinates cell division and chromosome segregation. The N-terminus is involved in assembly of the cell-division machinery. The C-terminus functions as a DNA motor that moves dsDNA in an ATP-dependent manner towards the dif recombination site, which is located within the replication terminus region. Translocation stops specifically at Xer-dif sites, where FtsK interacts with the Xer recombinase, allowing activation of chromosome unlinking by recombination. FtsK orienting polar sequences (KOPS) guide the direction of DNA translocation. FtsK can remove proteins from DNA as it translocates, but translocation stops specifically at XerCD-dif site, thereby preventing removal of XerC and XerD from dif (By similarity).</text>
</comment>
<comment type="subunit">
    <text evidence="1">Homohexamer. Forms a ring that surrounds DNA (By similarity).</text>
</comment>
<comment type="subcellular location">
    <subcellularLocation>
        <location evidence="1">Cell inner membrane</location>
        <topology evidence="1">Multi-pass membrane protein</topology>
    </subcellularLocation>
    <text evidence="1">Located at the septum.</text>
</comment>
<comment type="domain">
    <text evidence="1">Consists of an N-terminal domain, which is sufficient for the localization to the septal ring and is required for cell division, followed by a linker domain, and a C-terminal domain, which forms the translocation motor involved in chromosome segregation. The C-terminal domain can be further subdivided into alpha, beta and gamma subdomains. The alpha and beta subdomains multimerise to produce a hexameric ring, contain the nucleotide binding motif and form the DNA pump. The gamma subdomain is a regulatory subdomain that controls translocation of DNA by recognition of KOPS motifs and interacts with XerD recombinase (By similarity).</text>
</comment>
<comment type="similarity">
    <text evidence="4">Belongs to the FtsK/SpoIIIE/SftA family.</text>
</comment>
<sequence>MTVIERFKSNLKGKQNLINFGFILIGLFGCYLLIAWASYSPLDNAWSTASSVTHDTVLNKTGKLGAWLIDLLYAFLGNVAFVVPFVLFSFAIYALIFRIAEQWKWRNLLLQIGSFILLLIGLSGIASVLLPNSAYYLAGGFVGGMLQSLLNGIIGQVGLLLLSTVLMSIGFYFCSGQLLFSLGIQFYQWLFIKKPQSNTILEAANPHLNAQNNETTKSIVANPSENAHVDQLVTHENATEQLTDVSAFTRPTIHGLKSSSTLNTDKTKYNQVNAQPLTDPMMFKIEKKVILPKINMQHPENELTNLSMEQTNSIDNLEIRLPKVHLNTAVTNPEIKTVEHHAQNRPLEMPTQIQPVFDQPITPTISLNVEDQPLDIESNEAQLAEEFAAAEQMRLANMEQRAKAEGLEETFNQIITSPTLTVSINESSEQPTEKDLNPTHHDNGANYPKGYGKTLLHPLLQRNNVVEKPTTPLPTLELLAKNPVQTQQITEQEIFDTSHRLENALANYNVKATVEDVLVGPVVTRYEIKPAAGIKANKVTALANDLARELMFKAIRITEVVPGKPYMGIETPNTHRQTVWLRDVLDSEAFRHTQATLPMALGKDISGQPIVVDMAKMPHLLVAGQTGGGKSVGINTMILSLLFKLTPEQVRFIMIDPKVVELSVYNDIPHLLTPVVTDMKKAANALRWAVGEMERRYLLISHLQVRNIEGYNDKIDQASAMNFPIPDPTWRPADSIGQLPPPLTKLSYIVLIVDEFADLIMSAGKEVEEYIMRIAQKARAVGIHLILATQRPSTDVITGVIKANIPSRIAFTVASQIDSRTILDAGGAEALLGRGDMLYSASGSPEIMRIHGAFMSDEEVQRIADNWRARGKPQYLDSVVASHEDENDSRTNTITELDPLFDEIVAYVIESGVTSISGIQRRFSLGFNRAGRIIDQMEAQAIISEPGKGGKREVLAR</sequence>
<name>FTSK_HAEDU</name>
<feature type="chain" id="PRO_0000098260" description="DNA translocase FtsK">
    <location>
        <begin position="1"/>
        <end position="957"/>
    </location>
</feature>
<feature type="transmembrane region" description="Helical" evidence="2">
    <location>
        <begin position="17"/>
        <end position="37"/>
    </location>
</feature>
<feature type="transmembrane region" description="Helical" evidence="2">
    <location>
        <begin position="77"/>
        <end position="97"/>
    </location>
</feature>
<feature type="transmembrane region" description="Helical" evidence="2">
    <location>
        <begin position="108"/>
        <end position="128"/>
    </location>
</feature>
<feature type="transmembrane region" description="Helical" evidence="2">
    <location>
        <begin position="129"/>
        <end position="149"/>
    </location>
</feature>
<feature type="transmembrane region" description="Helical" evidence="2">
    <location>
        <begin position="153"/>
        <end position="173"/>
    </location>
</feature>
<feature type="topological domain" description="Cytoplasmic" evidence="2">
    <location>
        <begin position="174"/>
        <end position="957"/>
    </location>
</feature>
<feature type="domain" description="FtsK" evidence="3">
    <location>
        <begin position="607"/>
        <end position="820"/>
    </location>
</feature>
<feature type="binding site" evidence="3">
    <location>
        <begin position="627"/>
        <end position="632"/>
    </location>
    <ligand>
        <name>ATP</name>
        <dbReference type="ChEBI" id="CHEBI:30616"/>
    </ligand>
</feature>
<evidence type="ECO:0000250" key="1"/>
<evidence type="ECO:0000255" key="2"/>
<evidence type="ECO:0000255" key="3">
    <source>
        <dbReference type="PROSITE-ProRule" id="PRU00289"/>
    </source>
</evidence>
<evidence type="ECO:0000305" key="4"/>
<accession>P59836</accession>
<keyword id="KW-0067">ATP-binding</keyword>
<keyword id="KW-0131">Cell cycle</keyword>
<keyword id="KW-0132">Cell division</keyword>
<keyword id="KW-0997">Cell inner membrane</keyword>
<keyword id="KW-1003">Cell membrane</keyword>
<keyword id="KW-0159">Chromosome partition</keyword>
<keyword id="KW-0238">DNA-binding</keyword>
<keyword id="KW-0472">Membrane</keyword>
<keyword id="KW-0547">Nucleotide-binding</keyword>
<keyword id="KW-1185">Reference proteome</keyword>
<keyword id="KW-0812">Transmembrane</keyword>
<keyword id="KW-1133">Transmembrane helix</keyword>
<gene>
    <name type="primary">ftsK</name>
    <name type="ordered locus">HD_1476</name>
</gene>
<reference key="1">
    <citation type="submission" date="2003-06" db="EMBL/GenBank/DDBJ databases">
        <title>The complete genome sequence of Haemophilus ducreyi.</title>
        <authorList>
            <person name="Munson R.S. Jr."/>
            <person name="Ray W.C."/>
            <person name="Mahairas G."/>
            <person name="Sabo P."/>
            <person name="Mungur R."/>
            <person name="Johnson L."/>
            <person name="Nguyen D."/>
            <person name="Wang J."/>
            <person name="Forst C."/>
            <person name="Hood L."/>
        </authorList>
    </citation>
    <scope>NUCLEOTIDE SEQUENCE [LARGE SCALE GENOMIC DNA]</scope>
    <source>
        <strain>35000HP / ATCC 700724</strain>
    </source>
</reference>
<proteinExistence type="inferred from homology"/>
<dbReference type="EMBL" id="AE017143">
    <property type="protein sequence ID" value="AAP96278.1"/>
    <property type="molecule type" value="Genomic_DNA"/>
</dbReference>
<dbReference type="SMR" id="P59836"/>
<dbReference type="STRING" id="233412.HD_1476"/>
<dbReference type="KEGG" id="hdu:HD_1476"/>
<dbReference type="eggNOG" id="COG1674">
    <property type="taxonomic scope" value="Bacteria"/>
</dbReference>
<dbReference type="HOGENOM" id="CLU_001981_7_0_6"/>
<dbReference type="Proteomes" id="UP000001022">
    <property type="component" value="Chromosome"/>
</dbReference>
<dbReference type="GO" id="GO:0005886">
    <property type="term" value="C:plasma membrane"/>
    <property type="evidence" value="ECO:0007669"/>
    <property type="project" value="UniProtKB-SubCell"/>
</dbReference>
<dbReference type="GO" id="GO:0005524">
    <property type="term" value="F:ATP binding"/>
    <property type="evidence" value="ECO:0007669"/>
    <property type="project" value="UniProtKB-KW"/>
</dbReference>
<dbReference type="GO" id="GO:0003677">
    <property type="term" value="F:DNA binding"/>
    <property type="evidence" value="ECO:0007669"/>
    <property type="project" value="UniProtKB-KW"/>
</dbReference>
<dbReference type="GO" id="GO:0051301">
    <property type="term" value="P:cell division"/>
    <property type="evidence" value="ECO:0007669"/>
    <property type="project" value="UniProtKB-KW"/>
</dbReference>
<dbReference type="GO" id="GO:0007059">
    <property type="term" value="P:chromosome segregation"/>
    <property type="evidence" value="ECO:0007669"/>
    <property type="project" value="UniProtKB-KW"/>
</dbReference>
<dbReference type="CDD" id="cd01127">
    <property type="entry name" value="TrwB_TraG_TraD_VirD4"/>
    <property type="match status" value="1"/>
</dbReference>
<dbReference type="FunFam" id="3.40.50.300:FF:000209">
    <property type="entry name" value="Cell division protein FtsK"/>
    <property type="match status" value="1"/>
</dbReference>
<dbReference type="Gene3D" id="3.30.980.40">
    <property type="match status" value="1"/>
</dbReference>
<dbReference type="Gene3D" id="3.40.50.300">
    <property type="entry name" value="P-loop containing nucleotide triphosphate hydrolases"/>
    <property type="match status" value="1"/>
</dbReference>
<dbReference type="Gene3D" id="1.10.10.10">
    <property type="entry name" value="Winged helix-like DNA-binding domain superfamily/Winged helix DNA-binding domain"/>
    <property type="match status" value="1"/>
</dbReference>
<dbReference type="InterPro" id="IPR050206">
    <property type="entry name" value="FtsK/SpoIIIE/SftA"/>
</dbReference>
<dbReference type="InterPro" id="IPR025199">
    <property type="entry name" value="FtsK_4TM"/>
</dbReference>
<dbReference type="InterPro" id="IPR041027">
    <property type="entry name" value="FtsK_alpha"/>
</dbReference>
<dbReference type="InterPro" id="IPR002543">
    <property type="entry name" value="FtsK_dom"/>
</dbReference>
<dbReference type="InterPro" id="IPR018541">
    <property type="entry name" value="Ftsk_gamma"/>
</dbReference>
<dbReference type="InterPro" id="IPR027417">
    <property type="entry name" value="P-loop_NTPase"/>
</dbReference>
<dbReference type="InterPro" id="IPR036388">
    <property type="entry name" value="WH-like_DNA-bd_sf"/>
</dbReference>
<dbReference type="InterPro" id="IPR036390">
    <property type="entry name" value="WH_DNA-bd_sf"/>
</dbReference>
<dbReference type="PANTHER" id="PTHR22683:SF41">
    <property type="entry name" value="DNA TRANSLOCASE FTSK"/>
    <property type="match status" value="1"/>
</dbReference>
<dbReference type="PANTHER" id="PTHR22683">
    <property type="entry name" value="SPORULATION PROTEIN RELATED"/>
    <property type="match status" value="1"/>
</dbReference>
<dbReference type="Pfam" id="PF13491">
    <property type="entry name" value="FtsK_4TM"/>
    <property type="match status" value="1"/>
</dbReference>
<dbReference type="Pfam" id="PF17854">
    <property type="entry name" value="FtsK_alpha"/>
    <property type="match status" value="1"/>
</dbReference>
<dbReference type="Pfam" id="PF09397">
    <property type="entry name" value="FtsK_gamma"/>
    <property type="match status" value="1"/>
</dbReference>
<dbReference type="Pfam" id="PF01580">
    <property type="entry name" value="FtsK_SpoIIIE"/>
    <property type="match status" value="1"/>
</dbReference>
<dbReference type="SMART" id="SM00843">
    <property type="entry name" value="Ftsk_gamma"/>
    <property type="match status" value="1"/>
</dbReference>
<dbReference type="SUPFAM" id="SSF52540">
    <property type="entry name" value="P-loop containing nucleoside triphosphate hydrolases"/>
    <property type="match status" value="1"/>
</dbReference>
<dbReference type="SUPFAM" id="SSF46785">
    <property type="entry name" value="Winged helix' DNA-binding domain"/>
    <property type="match status" value="1"/>
</dbReference>
<dbReference type="PROSITE" id="PS50901">
    <property type="entry name" value="FTSK"/>
    <property type="match status" value="1"/>
</dbReference>
<organism>
    <name type="scientific">Haemophilus ducreyi (strain 35000HP / ATCC 700724)</name>
    <dbReference type="NCBI Taxonomy" id="233412"/>
    <lineage>
        <taxon>Bacteria</taxon>
        <taxon>Pseudomonadati</taxon>
        <taxon>Pseudomonadota</taxon>
        <taxon>Gammaproteobacteria</taxon>
        <taxon>Pasteurellales</taxon>
        <taxon>Pasteurellaceae</taxon>
        <taxon>Haemophilus</taxon>
    </lineage>
</organism>
<protein>
    <recommendedName>
        <fullName>DNA translocase FtsK</fullName>
    </recommendedName>
</protein>